<proteinExistence type="inferred from homology"/>
<dbReference type="EC" id="6.3.4.5" evidence="1"/>
<dbReference type="EMBL" id="CP000009">
    <property type="protein sequence ID" value="AAW60038.1"/>
    <property type="molecule type" value="Genomic_DNA"/>
</dbReference>
<dbReference type="RefSeq" id="WP_011251841.1">
    <property type="nucleotide sequence ID" value="NZ_LT900338.1"/>
</dbReference>
<dbReference type="SMR" id="Q5FUA8"/>
<dbReference type="STRING" id="290633.GOX0255"/>
<dbReference type="KEGG" id="gox:GOX0255"/>
<dbReference type="eggNOG" id="COG0137">
    <property type="taxonomic scope" value="Bacteria"/>
</dbReference>
<dbReference type="HOGENOM" id="CLU_032784_4_2_5"/>
<dbReference type="UniPathway" id="UPA00068">
    <property type="reaction ID" value="UER00113"/>
</dbReference>
<dbReference type="Proteomes" id="UP000006375">
    <property type="component" value="Chromosome"/>
</dbReference>
<dbReference type="GO" id="GO:0005737">
    <property type="term" value="C:cytoplasm"/>
    <property type="evidence" value="ECO:0007669"/>
    <property type="project" value="UniProtKB-SubCell"/>
</dbReference>
<dbReference type="GO" id="GO:0004055">
    <property type="term" value="F:argininosuccinate synthase activity"/>
    <property type="evidence" value="ECO:0007669"/>
    <property type="project" value="UniProtKB-UniRule"/>
</dbReference>
<dbReference type="GO" id="GO:0005524">
    <property type="term" value="F:ATP binding"/>
    <property type="evidence" value="ECO:0007669"/>
    <property type="project" value="UniProtKB-UniRule"/>
</dbReference>
<dbReference type="GO" id="GO:0000053">
    <property type="term" value="P:argininosuccinate metabolic process"/>
    <property type="evidence" value="ECO:0007669"/>
    <property type="project" value="TreeGrafter"/>
</dbReference>
<dbReference type="GO" id="GO:0006526">
    <property type="term" value="P:L-arginine biosynthetic process"/>
    <property type="evidence" value="ECO:0007669"/>
    <property type="project" value="UniProtKB-UniRule"/>
</dbReference>
<dbReference type="GO" id="GO:0000050">
    <property type="term" value="P:urea cycle"/>
    <property type="evidence" value="ECO:0007669"/>
    <property type="project" value="TreeGrafter"/>
</dbReference>
<dbReference type="CDD" id="cd01999">
    <property type="entry name" value="ASS"/>
    <property type="match status" value="1"/>
</dbReference>
<dbReference type="FunFam" id="3.40.50.620:FF:000019">
    <property type="entry name" value="Argininosuccinate synthase"/>
    <property type="match status" value="1"/>
</dbReference>
<dbReference type="FunFam" id="3.90.1260.10:FF:000007">
    <property type="entry name" value="Argininosuccinate synthase"/>
    <property type="match status" value="1"/>
</dbReference>
<dbReference type="Gene3D" id="3.90.1260.10">
    <property type="entry name" value="Argininosuccinate synthetase, chain A, domain 2"/>
    <property type="match status" value="1"/>
</dbReference>
<dbReference type="Gene3D" id="3.40.50.620">
    <property type="entry name" value="HUPs"/>
    <property type="match status" value="1"/>
</dbReference>
<dbReference type="Gene3D" id="1.20.5.470">
    <property type="entry name" value="Single helix bin"/>
    <property type="match status" value="1"/>
</dbReference>
<dbReference type="HAMAP" id="MF_00005">
    <property type="entry name" value="Arg_succ_synth_type1"/>
    <property type="match status" value="1"/>
</dbReference>
<dbReference type="InterPro" id="IPR048268">
    <property type="entry name" value="Arginosuc_syn_C"/>
</dbReference>
<dbReference type="InterPro" id="IPR048267">
    <property type="entry name" value="Arginosuc_syn_N"/>
</dbReference>
<dbReference type="InterPro" id="IPR001518">
    <property type="entry name" value="Arginosuc_synth"/>
</dbReference>
<dbReference type="InterPro" id="IPR018223">
    <property type="entry name" value="Arginosuc_synth_CS"/>
</dbReference>
<dbReference type="InterPro" id="IPR023434">
    <property type="entry name" value="Arginosuc_synth_type_1_subfam"/>
</dbReference>
<dbReference type="InterPro" id="IPR024074">
    <property type="entry name" value="AS_cat/multimer_dom_body"/>
</dbReference>
<dbReference type="InterPro" id="IPR014729">
    <property type="entry name" value="Rossmann-like_a/b/a_fold"/>
</dbReference>
<dbReference type="NCBIfam" id="TIGR00032">
    <property type="entry name" value="argG"/>
    <property type="match status" value="1"/>
</dbReference>
<dbReference type="NCBIfam" id="NF001770">
    <property type="entry name" value="PRK00509.1"/>
    <property type="match status" value="1"/>
</dbReference>
<dbReference type="PANTHER" id="PTHR11587">
    <property type="entry name" value="ARGININOSUCCINATE SYNTHASE"/>
    <property type="match status" value="1"/>
</dbReference>
<dbReference type="PANTHER" id="PTHR11587:SF2">
    <property type="entry name" value="ARGININOSUCCINATE SYNTHASE"/>
    <property type="match status" value="1"/>
</dbReference>
<dbReference type="Pfam" id="PF20979">
    <property type="entry name" value="Arginosuc_syn_C"/>
    <property type="match status" value="1"/>
</dbReference>
<dbReference type="Pfam" id="PF00764">
    <property type="entry name" value="Arginosuc_synth"/>
    <property type="match status" value="1"/>
</dbReference>
<dbReference type="SUPFAM" id="SSF52402">
    <property type="entry name" value="Adenine nucleotide alpha hydrolases-like"/>
    <property type="match status" value="1"/>
</dbReference>
<dbReference type="SUPFAM" id="SSF69864">
    <property type="entry name" value="Argininosuccinate synthetase, C-terminal domain"/>
    <property type="match status" value="1"/>
</dbReference>
<dbReference type="PROSITE" id="PS00564">
    <property type="entry name" value="ARGININOSUCCIN_SYN_1"/>
    <property type="match status" value="1"/>
</dbReference>
<dbReference type="PROSITE" id="PS00565">
    <property type="entry name" value="ARGININOSUCCIN_SYN_2"/>
    <property type="match status" value="1"/>
</dbReference>
<feature type="chain" id="PRO_0000263929" description="Argininosuccinate synthase">
    <location>
        <begin position="1"/>
        <end position="410"/>
    </location>
</feature>
<feature type="binding site" evidence="1">
    <location>
        <begin position="13"/>
        <end position="21"/>
    </location>
    <ligand>
        <name>ATP</name>
        <dbReference type="ChEBI" id="CHEBI:30616"/>
    </ligand>
</feature>
<feature type="binding site" evidence="1">
    <location>
        <position position="40"/>
    </location>
    <ligand>
        <name>ATP</name>
        <dbReference type="ChEBI" id="CHEBI:30616"/>
    </ligand>
</feature>
<feature type="binding site" evidence="1">
    <location>
        <position position="91"/>
    </location>
    <ligand>
        <name>L-citrulline</name>
        <dbReference type="ChEBI" id="CHEBI:57743"/>
    </ligand>
</feature>
<feature type="binding site" evidence="1">
    <location>
        <position position="96"/>
    </location>
    <ligand>
        <name>L-citrulline</name>
        <dbReference type="ChEBI" id="CHEBI:57743"/>
    </ligand>
</feature>
<feature type="binding site" evidence="1">
    <location>
        <position position="121"/>
    </location>
    <ligand>
        <name>ATP</name>
        <dbReference type="ChEBI" id="CHEBI:30616"/>
    </ligand>
</feature>
<feature type="binding site" evidence="1">
    <location>
        <position position="123"/>
    </location>
    <ligand>
        <name>L-aspartate</name>
        <dbReference type="ChEBI" id="CHEBI:29991"/>
    </ligand>
</feature>
<feature type="binding site" evidence="1">
    <location>
        <position position="127"/>
    </location>
    <ligand>
        <name>L-aspartate</name>
        <dbReference type="ChEBI" id="CHEBI:29991"/>
    </ligand>
</feature>
<feature type="binding site" evidence="1">
    <location>
        <position position="127"/>
    </location>
    <ligand>
        <name>L-citrulline</name>
        <dbReference type="ChEBI" id="CHEBI:57743"/>
    </ligand>
</feature>
<feature type="binding site" evidence="1">
    <location>
        <position position="128"/>
    </location>
    <ligand>
        <name>L-aspartate</name>
        <dbReference type="ChEBI" id="CHEBI:29991"/>
    </ligand>
</feature>
<feature type="binding site" evidence="1">
    <location>
        <position position="131"/>
    </location>
    <ligand>
        <name>L-citrulline</name>
        <dbReference type="ChEBI" id="CHEBI:57743"/>
    </ligand>
</feature>
<feature type="binding site" evidence="1">
    <location>
        <position position="182"/>
    </location>
    <ligand>
        <name>L-citrulline</name>
        <dbReference type="ChEBI" id="CHEBI:57743"/>
    </ligand>
</feature>
<feature type="binding site" evidence="1">
    <location>
        <position position="191"/>
    </location>
    <ligand>
        <name>L-citrulline</name>
        <dbReference type="ChEBI" id="CHEBI:57743"/>
    </ligand>
</feature>
<feature type="binding site" evidence="1">
    <location>
        <position position="267"/>
    </location>
    <ligand>
        <name>L-citrulline</name>
        <dbReference type="ChEBI" id="CHEBI:57743"/>
    </ligand>
</feature>
<feature type="binding site" evidence="1">
    <location>
        <position position="279"/>
    </location>
    <ligand>
        <name>L-citrulline</name>
        <dbReference type="ChEBI" id="CHEBI:57743"/>
    </ligand>
</feature>
<gene>
    <name evidence="1" type="primary">argG</name>
    <name type="ordered locus">GOX0255</name>
</gene>
<accession>Q5FUA8</accession>
<name>ASSY_GLUOX</name>
<organism>
    <name type="scientific">Gluconobacter oxydans (strain 621H)</name>
    <name type="common">Gluconobacter suboxydans</name>
    <dbReference type="NCBI Taxonomy" id="290633"/>
    <lineage>
        <taxon>Bacteria</taxon>
        <taxon>Pseudomonadati</taxon>
        <taxon>Pseudomonadota</taxon>
        <taxon>Alphaproteobacteria</taxon>
        <taxon>Acetobacterales</taxon>
        <taxon>Acetobacteraceae</taxon>
        <taxon>Gluconobacter</taxon>
    </lineage>
</organism>
<comment type="catalytic activity">
    <reaction evidence="1">
        <text>L-citrulline + L-aspartate + ATP = 2-(N(omega)-L-arginino)succinate + AMP + diphosphate + H(+)</text>
        <dbReference type="Rhea" id="RHEA:10932"/>
        <dbReference type="ChEBI" id="CHEBI:15378"/>
        <dbReference type="ChEBI" id="CHEBI:29991"/>
        <dbReference type="ChEBI" id="CHEBI:30616"/>
        <dbReference type="ChEBI" id="CHEBI:33019"/>
        <dbReference type="ChEBI" id="CHEBI:57472"/>
        <dbReference type="ChEBI" id="CHEBI:57743"/>
        <dbReference type="ChEBI" id="CHEBI:456215"/>
        <dbReference type="EC" id="6.3.4.5"/>
    </reaction>
</comment>
<comment type="pathway">
    <text evidence="1">Amino-acid biosynthesis; L-arginine biosynthesis; L-arginine from L-ornithine and carbamoyl phosphate: step 2/3.</text>
</comment>
<comment type="subunit">
    <text evidence="1">Homotetramer.</text>
</comment>
<comment type="subcellular location">
    <subcellularLocation>
        <location evidence="1">Cytoplasm</location>
    </subcellularLocation>
</comment>
<comment type="similarity">
    <text evidence="1">Belongs to the argininosuccinate synthase family. Type 1 subfamily.</text>
</comment>
<protein>
    <recommendedName>
        <fullName evidence="1">Argininosuccinate synthase</fullName>
        <ecNumber evidence="1">6.3.4.5</ecNumber>
    </recommendedName>
    <alternativeName>
        <fullName evidence="1">Citrulline--aspartate ligase</fullName>
    </alternativeName>
</protein>
<reference key="1">
    <citation type="journal article" date="2005" name="Nat. Biotechnol.">
        <title>Complete genome sequence of the acetic acid bacterium Gluconobacter oxydans.</title>
        <authorList>
            <person name="Prust C."/>
            <person name="Hoffmeister M."/>
            <person name="Liesegang H."/>
            <person name="Wiezer A."/>
            <person name="Fricke W.F."/>
            <person name="Ehrenreich A."/>
            <person name="Gottschalk G."/>
            <person name="Deppenmeier U."/>
        </authorList>
    </citation>
    <scope>NUCLEOTIDE SEQUENCE [LARGE SCALE GENOMIC DNA]</scope>
    <source>
        <strain>621H</strain>
    </source>
</reference>
<keyword id="KW-0028">Amino-acid biosynthesis</keyword>
<keyword id="KW-0055">Arginine biosynthesis</keyword>
<keyword id="KW-0067">ATP-binding</keyword>
<keyword id="KW-0963">Cytoplasm</keyword>
<keyword id="KW-0436">Ligase</keyword>
<keyword id="KW-0547">Nucleotide-binding</keyword>
<keyword id="KW-1185">Reference proteome</keyword>
<evidence type="ECO:0000255" key="1">
    <source>
        <dbReference type="HAMAP-Rule" id="MF_00005"/>
    </source>
</evidence>
<sequence length="410" mass="45588">MSAHQDVKKVVLAYSGGLDTSVILRWLQKTYNCEVVTFTADLGQGEELEPARKKAEMFGVKEIFVEDLRETFVKDFVFPMFRANTLYEGQYLLGTSIARPLIAQRQIEIAEAVGADAVAHGATGKGNDQVRFELGYYSLKPDVKVIAPWREWDLTSRTKLLAFAEENQIPVTKDKRGEAPFSVDANLLHSSSEGKLLEDPSIGAEEIVFQRTISPEAAPDVATEITIDFVSGDPVAINGVEMTPATLLTRLNELGRDNGIGRLDIVENRFVGMKSRGIYETPGGTILLAAHRSIESITLDREAAHLKDSIMPRYAEIIYNGFWFSPERRMLQALIDTSQHSVTGRVRMRLYKGNVTCVGRESPHSLYDTRVVTFEDDEGAYNQQDAQGFIKLNALRLRLGGQIGRRGGTL</sequence>